<gene>
    <name evidence="1" type="primary">panD2</name>
    <name type="ordered locus">Bpro_1578</name>
</gene>
<protein>
    <recommendedName>
        <fullName evidence="1">Aspartate 1-decarboxylase 2</fullName>
        <ecNumber evidence="1">4.1.1.11</ecNumber>
    </recommendedName>
    <alternativeName>
        <fullName evidence="1">Aspartate alpha-decarboxylase 2</fullName>
    </alternativeName>
    <component>
        <recommendedName>
            <fullName evidence="1">Aspartate 1-decarboxylase beta chain</fullName>
        </recommendedName>
    </component>
    <component>
        <recommendedName>
            <fullName evidence="1">Aspartate 1-decarboxylase alpha chain</fullName>
        </recommendedName>
    </component>
</protein>
<keyword id="KW-0068">Autocatalytic cleavage</keyword>
<keyword id="KW-0963">Cytoplasm</keyword>
<keyword id="KW-0210">Decarboxylase</keyword>
<keyword id="KW-0456">Lyase</keyword>
<keyword id="KW-0566">Pantothenate biosynthesis</keyword>
<keyword id="KW-0670">Pyruvate</keyword>
<keyword id="KW-1185">Reference proteome</keyword>
<keyword id="KW-0704">Schiff base</keyword>
<keyword id="KW-0865">Zymogen</keyword>
<accession>Q12D75</accession>
<sequence length="126" mass="14105">MFRTLLKSKIHRVAVTHCELHYEGSCAIDEDLLDAANIAENEQIHIWNINNGERFVTYAIKGERGSGMISVNGSAARRAAAGDLIIIAAFAQVHNDQVSAHEPQLVFVDDKNRQTELRHKVPTQRM</sequence>
<name>PAND2_POLSJ</name>
<dbReference type="EC" id="4.1.1.11" evidence="1"/>
<dbReference type="EMBL" id="CP000316">
    <property type="protein sequence ID" value="ABE43517.1"/>
    <property type="molecule type" value="Genomic_DNA"/>
</dbReference>
<dbReference type="RefSeq" id="WP_011482516.1">
    <property type="nucleotide sequence ID" value="NC_007948.1"/>
</dbReference>
<dbReference type="SMR" id="Q12D75"/>
<dbReference type="STRING" id="296591.Bpro_1578"/>
<dbReference type="KEGG" id="pol:Bpro_1578"/>
<dbReference type="eggNOG" id="COG0853">
    <property type="taxonomic scope" value="Bacteria"/>
</dbReference>
<dbReference type="HOGENOM" id="CLU_115305_2_0_4"/>
<dbReference type="OrthoDB" id="9803983at2"/>
<dbReference type="UniPathway" id="UPA00028">
    <property type="reaction ID" value="UER00002"/>
</dbReference>
<dbReference type="Proteomes" id="UP000001983">
    <property type="component" value="Chromosome"/>
</dbReference>
<dbReference type="GO" id="GO:0005829">
    <property type="term" value="C:cytosol"/>
    <property type="evidence" value="ECO:0007669"/>
    <property type="project" value="TreeGrafter"/>
</dbReference>
<dbReference type="GO" id="GO:0004068">
    <property type="term" value="F:aspartate 1-decarboxylase activity"/>
    <property type="evidence" value="ECO:0007669"/>
    <property type="project" value="UniProtKB-UniRule"/>
</dbReference>
<dbReference type="GO" id="GO:0006523">
    <property type="term" value="P:alanine biosynthetic process"/>
    <property type="evidence" value="ECO:0007669"/>
    <property type="project" value="InterPro"/>
</dbReference>
<dbReference type="GO" id="GO:0015940">
    <property type="term" value="P:pantothenate biosynthetic process"/>
    <property type="evidence" value="ECO:0007669"/>
    <property type="project" value="UniProtKB-UniRule"/>
</dbReference>
<dbReference type="CDD" id="cd06919">
    <property type="entry name" value="Asp_decarbox"/>
    <property type="match status" value="1"/>
</dbReference>
<dbReference type="Gene3D" id="2.40.40.20">
    <property type="match status" value="1"/>
</dbReference>
<dbReference type="HAMAP" id="MF_00446">
    <property type="entry name" value="PanD"/>
    <property type="match status" value="1"/>
</dbReference>
<dbReference type="InterPro" id="IPR009010">
    <property type="entry name" value="Asp_de-COase-like_dom_sf"/>
</dbReference>
<dbReference type="InterPro" id="IPR003190">
    <property type="entry name" value="Asp_decarbox"/>
</dbReference>
<dbReference type="NCBIfam" id="TIGR00223">
    <property type="entry name" value="panD"/>
    <property type="match status" value="1"/>
</dbReference>
<dbReference type="PANTHER" id="PTHR21012">
    <property type="entry name" value="ASPARTATE 1-DECARBOXYLASE"/>
    <property type="match status" value="1"/>
</dbReference>
<dbReference type="PANTHER" id="PTHR21012:SF0">
    <property type="entry name" value="ASPARTATE 1-DECARBOXYLASE"/>
    <property type="match status" value="1"/>
</dbReference>
<dbReference type="Pfam" id="PF02261">
    <property type="entry name" value="Asp_decarbox"/>
    <property type="match status" value="1"/>
</dbReference>
<dbReference type="PIRSF" id="PIRSF006246">
    <property type="entry name" value="Asp_decarbox"/>
    <property type="match status" value="1"/>
</dbReference>
<dbReference type="SUPFAM" id="SSF50692">
    <property type="entry name" value="ADC-like"/>
    <property type="match status" value="1"/>
</dbReference>
<organism>
    <name type="scientific">Polaromonas sp. (strain JS666 / ATCC BAA-500)</name>
    <dbReference type="NCBI Taxonomy" id="296591"/>
    <lineage>
        <taxon>Bacteria</taxon>
        <taxon>Pseudomonadati</taxon>
        <taxon>Pseudomonadota</taxon>
        <taxon>Betaproteobacteria</taxon>
        <taxon>Burkholderiales</taxon>
        <taxon>Comamonadaceae</taxon>
        <taxon>Polaromonas</taxon>
    </lineage>
</organism>
<feature type="chain" id="PRO_0000307049" description="Aspartate 1-decarboxylase beta chain" evidence="1">
    <location>
        <begin position="1"/>
        <end position="24"/>
    </location>
</feature>
<feature type="chain" id="PRO_0000307050" description="Aspartate 1-decarboxylase alpha chain" evidence="1">
    <location>
        <begin position="25"/>
        <end position="126"/>
    </location>
</feature>
<feature type="active site" description="Schiff-base intermediate with substrate; via pyruvic acid" evidence="1">
    <location>
        <position position="25"/>
    </location>
</feature>
<feature type="active site" description="Proton donor" evidence="1">
    <location>
        <position position="58"/>
    </location>
</feature>
<feature type="binding site" evidence="1">
    <location>
        <position position="57"/>
    </location>
    <ligand>
        <name>substrate</name>
    </ligand>
</feature>
<feature type="binding site" evidence="1">
    <location>
        <begin position="73"/>
        <end position="75"/>
    </location>
    <ligand>
        <name>substrate</name>
    </ligand>
</feature>
<feature type="modified residue" description="Pyruvic acid (Ser)" evidence="1">
    <location>
        <position position="25"/>
    </location>
</feature>
<evidence type="ECO:0000255" key="1">
    <source>
        <dbReference type="HAMAP-Rule" id="MF_00446"/>
    </source>
</evidence>
<reference key="1">
    <citation type="journal article" date="2008" name="Appl. Environ. Microbiol.">
        <title>The genome of Polaromonas sp. strain JS666: insights into the evolution of a hydrocarbon- and xenobiotic-degrading bacterium, and features of relevance to biotechnology.</title>
        <authorList>
            <person name="Mattes T.E."/>
            <person name="Alexander A.K."/>
            <person name="Richardson P.M."/>
            <person name="Munk A.C."/>
            <person name="Han C.S."/>
            <person name="Stothard P."/>
            <person name="Coleman N.V."/>
        </authorList>
    </citation>
    <scope>NUCLEOTIDE SEQUENCE [LARGE SCALE GENOMIC DNA]</scope>
    <source>
        <strain>JS666 / ATCC BAA-500</strain>
    </source>
</reference>
<proteinExistence type="inferred from homology"/>
<comment type="function">
    <text evidence="1">Catalyzes the pyruvoyl-dependent decarboxylation of aspartate to produce beta-alanine.</text>
</comment>
<comment type="catalytic activity">
    <reaction evidence="1">
        <text>L-aspartate + H(+) = beta-alanine + CO2</text>
        <dbReference type="Rhea" id="RHEA:19497"/>
        <dbReference type="ChEBI" id="CHEBI:15378"/>
        <dbReference type="ChEBI" id="CHEBI:16526"/>
        <dbReference type="ChEBI" id="CHEBI:29991"/>
        <dbReference type="ChEBI" id="CHEBI:57966"/>
        <dbReference type="EC" id="4.1.1.11"/>
    </reaction>
</comment>
<comment type="cofactor">
    <cofactor evidence="1">
        <name>pyruvate</name>
        <dbReference type="ChEBI" id="CHEBI:15361"/>
    </cofactor>
    <text evidence="1">Binds 1 pyruvoyl group covalently per subunit.</text>
</comment>
<comment type="pathway">
    <text evidence="1">Cofactor biosynthesis; (R)-pantothenate biosynthesis; beta-alanine from L-aspartate: step 1/1.</text>
</comment>
<comment type="subunit">
    <text evidence="1">Heterooctamer of four alpha and four beta subunits.</text>
</comment>
<comment type="subcellular location">
    <subcellularLocation>
        <location evidence="1">Cytoplasm</location>
    </subcellularLocation>
</comment>
<comment type="PTM">
    <text evidence="1">Is synthesized initially as an inactive proenzyme, which is activated by self-cleavage at a specific serine bond to produce a beta-subunit with a hydroxyl group at its C-terminus and an alpha-subunit with a pyruvoyl group at its N-terminus.</text>
</comment>
<comment type="similarity">
    <text evidence="1">Belongs to the PanD family.</text>
</comment>